<feature type="chain" id="PRO_0000268547" description="Bifunctional protein FolD">
    <location>
        <begin position="1"/>
        <end position="284"/>
    </location>
</feature>
<feature type="binding site" evidence="1">
    <location>
        <begin position="166"/>
        <end position="168"/>
    </location>
    <ligand>
        <name>NADP(+)</name>
        <dbReference type="ChEBI" id="CHEBI:58349"/>
    </ligand>
</feature>
<feature type="binding site" evidence="1">
    <location>
        <position position="191"/>
    </location>
    <ligand>
        <name>NADP(+)</name>
        <dbReference type="ChEBI" id="CHEBI:58349"/>
    </ligand>
</feature>
<feature type="binding site" evidence="1">
    <location>
        <position position="232"/>
    </location>
    <ligand>
        <name>NADP(+)</name>
        <dbReference type="ChEBI" id="CHEBI:58349"/>
    </ligand>
</feature>
<comment type="function">
    <text evidence="1">Catalyzes the oxidation of 5,10-methylenetetrahydrofolate to 5,10-methenyltetrahydrofolate and then the hydrolysis of 5,10-methenyltetrahydrofolate to 10-formyltetrahydrofolate.</text>
</comment>
<comment type="catalytic activity">
    <reaction evidence="1">
        <text>(6R)-5,10-methylene-5,6,7,8-tetrahydrofolate + NADP(+) = (6R)-5,10-methenyltetrahydrofolate + NADPH</text>
        <dbReference type="Rhea" id="RHEA:22812"/>
        <dbReference type="ChEBI" id="CHEBI:15636"/>
        <dbReference type="ChEBI" id="CHEBI:57455"/>
        <dbReference type="ChEBI" id="CHEBI:57783"/>
        <dbReference type="ChEBI" id="CHEBI:58349"/>
        <dbReference type="EC" id="1.5.1.5"/>
    </reaction>
</comment>
<comment type="catalytic activity">
    <reaction evidence="1">
        <text>(6R)-5,10-methenyltetrahydrofolate + H2O = (6R)-10-formyltetrahydrofolate + H(+)</text>
        <dbReference type="Rhea" id="RHEA:23700"/>
        <dbReference type="ChEBI" id="CHEBI:15377"/>
        <dbReference type="ChEBI" id="CHEBI:15378"/>
        <dbReference type="ChEBI" id="CHEBI:57455"/>
        <dbReference type="ChEBI" id="CHEBI:195366"/>
        <dbReference type="EC" id="3.5.4.9"/>
    </reaction>
</comment>
<comment type="pathway">
    <text evidence="1">One-carbon metabolism; tetrahydrofolate interconversion.</text>
</comment>
<comment type="subunit">
    <text evidence="1">Homodimer.</text>
</comment>
<comment type="similarity">
    <text evidence="1">Belongs to the tetrahydrofolate dehydrogenase/cyclohydrolase family.</text>
</comment>
<protein>
    <recommendedName>
        <fullName evidence="1">Bifunctional protein FolD</fullName>
    </recommendedName>
    <domain>
        <recommendedName>
            <fullName evidence="1">Methylenetetrahydrofolate dehydrogenase</fullName>
            <ecNumber evidence="1">1.5.1.5</ecNumber>
        </recommendedName>
    </domain>
    <domain>
        <recommendedName>
            <fullName evidence="1">Methenyltetrahydrofolate cyclohydrolase</fullName>
            <ecNumber evidence="1">3.5.4.9</ecNumber>
        </recommendedName>
    </domain>
</protein>
<evidence type="ECO:0000255" key="1">
    <source>
        <dbReference type="HAMAP-Rule" id="MF_01576"/>
    </source>
</evidence>
<proteinExistence type="inferred from homology"/>
<keyword id="KW-0028">Amino-acid biosynthesis</keyword>
<keyword id="KW-0368">Histidine biosynthesis</keyword>
<keyword id="KW-0378">Hydrolase</keyword>
<keyword id="KW-0486">Methionine biosynthesis</keyword>
<keyword id="KW-0511">Multifunctional enzyme</keyword>
<keyword id="KW-0521">NADP</keyword>
<keyword id="KW-0554">One-carbon metabolism</keyword>
<keyword id="KW-0560">Oxidoreductase</keyword>
<keyword id="KW-0658">Purine biosynthesis</keyword>
<keyword id="KW-1185">Reference proteome</keyword>
<dbReference type="EC" id="1.5.1.5" evidence="1"/>
<dbReference type="EC" id="3.5.4.9" evidence="1"/>
<dbReference type="EMBL" id="CP000116">
    <property type="protein sequence ID" value="AAZ96642.1"/>
    <property type="molecule type" value="Genomic_DNA"/>
</dbReference>
<dbReference type="RefSeq" id="WP_011311201.1">
    <property type="nucleotide sequence ID" value="NC_007404.1"/>
</dbReference>
<dbReference type="SMR" id="Q3SKX9"/>
<dbReference type="STRING" id="292415.Tbd_0689"/>
<dbReference type="KEGG" id="tbd:Tbd_0689"/>
<dbReference type="eggNOG" id="COG0190">
    <property type="taxonomic scope" value="Bacteria"/>
</dbReference>
<dbReference type="HOGENOM" id="CLU_034045_2_1_4"/>
<dbReference type="OrthoDB" id="9803580at2"/>
<dbReference type="UniPathway" id="UPA00193"/>
<dbReference type="Proteomes" id="UP000008291">
    <property type="component" value="Chromosome"/>
</dbReference>
<dbReference type="GO" id="GO:0005829">
    <property type="term" value="C:cytosol"/>
    <property type="evidence" value="ECO:0007669"/>
    <property type="project" value="TreeGrafter"/>
</dbReference>
<dbReference type="GO" id="GO:0004477">
    <property type="term" value="F:methenyltetrahydrofolate cyclohydrolase activity"/>
    <property type="evidence" value="ECO:0007669"/>
    <property type="project" value="UniProtKB-UniRule"/>
</dbReference>
<dbReference type="GO" id="GO:0004488">
    <property type="term" value="F:methylenetetrahydrofolate dehydrogenase (NADP+) activity"/>
    <property type="evidence" value="ECO:0007669"/>
    <property type="project" value="UniProtKB-UniRule"/>
</dbReference>
<dbReference type="GO" id="GO:0000105">
    <property type="term" value="P:L-histidine biosynthetic process"/>
    <property type="evidence" value="ECO:0007669"/>
    <property type="project" value="UniProtKB-KW"/>
</dbReference>
<dbReference type="GO" id="GO:0009086">
    <property type="term" value="P:methionine biosynthetic process"/>
    <property type="evidence" value="ECO:0007669"/>
    <property type="project" value="UniProtKB-KW"/>
</dbReference>
<dbReference type="GO" id="GO:0006164">
    <property type="term" value="P:purine nucleotide biosynthetic process"/>
    <property type="evidence" value="ECO:0007669"/>
    <property type="project" value="UniProtKB-KW"/>
</dbReference>
<dbReference type="GO" id="GO:0035999">
    <property type="term" value="P:tetrahydrofolate interconversion"/>
    <property type="evidence" value="ECO:0007669"/>
    <property type="project" value="UniProtKB-UniRule"/>
</dbReference>
<dbReference type="CDD" id="cd01080">
    <property type="entry name" value="NAD_bind_m-THF_DH_Cyclohyd"/>
    <property type="match status" value="1"/>
</dbReference>
<dbReference type="FunFam" id="3.40.50.10860:FF:000001">
    <property type="entry name" value="Bifunctional protein FolD"/>
    <property type="match status" value="1"/>
</dbReference>
<dbReference type="FunFam" id="3.40.50.720:FF:000006">
    <property type="entry name" value="Bifunctional protein FolD"/>
    <property type="match status" value="1"/>
</dbReference>
<dbReference type="Gene3D" id="3.40.50.10860">
    <property type="entry name" value="Leucine Dehydrogenase, chain A, domain 1"/>
    <property type="match status" value="1"/>
</dbReference>
<dbReference type="Gene3D" id="3.40.50.720">
    <property type="entry name" value="NAD(P)-binding Rossmann-like Domain"/>
    <property type="match status" value="1"/>
</dbReference>
<dbReference type="HAMAP" id="MF_01576">
    <property type="entry name" value="THF_DHG_CYH"/>
    <property type="match status" value="1"/>
</dbReference>
<dbReference type="InterPro" id="IPR046346">
    <property type="entry name" value="Aminoacid_DH-like_N_sf"/>
</dbReference>
<dbReference type="InterPro" id="IPR036291">
    <property type="entry name" value="NAD(P)-bd_dom_sf"/>
</dbReference>
<dbReference type="InterPro" id="IPR000672">
    <property type="entry name" value="THF_DH/CycHdrlase"/>
</dbReference>
<dbReference type="InterPro" id="IPR020630">
    <property type="entry name" value="THF_DH/CycHdrlase_cat_dom"/>
</dbReference>
<dbReference type="InterPro" id="IPR020867">
    <property type="entry name" value="THF_DH/CycHdrlase_CS"/>
</dbReference>
<dbReference type="InterPro" id="IPR020631">
    <property type="entry name" value="THF_DH/CycHdrlase_NAD-bd_dom"/>
</dbReference>
<dbReference type="NCBIfam" id="NF008058">
    <property type="entry name" value="PRK10792.1"/>
    <property type="match status" value="1"/>
</dbReference>
<dbReference type="NCBIfam" id="NF010783">
    <property type="entry name" value="PRK14186.1"/>
    <property type="match status" value="1"/>
</dbReference>
<dbReference type="PANTHER" id="PTHR48099:SF5">
    <property type="entry name" value="C-1-TETRAHYDROFOLATE SYNTHASE, CYTOPLASMIC"/>
    <property type="match status" value="1"/>
</dbReference>
<dbReference type="PANTHER" id="PTHR48099">
    <property type="entry name" value="C-1-TETRAHYDROFOLATE SYNTHASE, CYTOPLASMIC-RELATED"/>
    <property type="match status" value="1"/>
</dbReference>
<dbReference type="Pfam" id="PF00763">
    <property type="entry name" value="THF_DHG_CYH"/>
    <property type="match status" value="1"/>
</dbReference>
<dbReference type="Pfam" id="PF02882">
    <property type="entry name" value="THF_DHG_CYH_C"/>
    <property type="match status" value="1"/>
</dbReference>
<dbReference type="PRINTS" id="PR00085">
    <property type="entry name" value="THFDHDRGNASE"/>
</dbReference>
<dbReference type="SUPFAM" id="SSF53223">
    <property type="entry name" value="Aminoacid dehydrogenase-like, N-terminal domain"/>
    <property type="match status" value="1"/>
</dbReference>
<dbReference type="SUPFAM" id="SSF51735">
    <property type="entry name" value="NAD(P)-binding Rossmann-fold domains"/>
    <property type="match status" value="1"/>
</dbReference>
<dbReference type="PROSITE" id="PS00766">
    <property type="entry name" value="THF_DHG_CYH_1"/>
    <property type="match status" value="1"/>
</dbReference>
<dbReference type="PROSITE" id="PS00767">
    <property type="entry name" value="THF_DHG_CYH_2"/>
    <property type="match status" value="1"/>
</dbReference>
<reference key="1">
    <citation type="journal article" date="2006" name="J. Bacteriol.">
        <title>The genome sequence of the obligately chemolithoautotrophic, facultatively anaerobic bacterium Thiobacillus denitrificans.</title>
        <authorList>
            <person name="Beller H.R."/>
            <person name="Chain P.S."/>
            <person name="Letain T.E."/>
            <person name="Chakicherla A."/>
            <person name="Larimer F.W."/>
            <person name="Richardson P.M."/>
            <person name="Coleman M.A."/>
            <person name="Wood A.P."/>
            <person name="Kelly D.P."/>
        </authorList>
    </citation>
    <scope>NUCLEOTIDE SEQUENCE [LARGE SCALE GENOMIC DNA]</scope>
    <source>
        <strain>ATCC 25259 / T1</strain>
    </source>
</reference>
<gene>
    <name evidence="1" type="primary">folD</name>
    <name type="ordered locus">Tbd_0689</name>
</gene>
<organism>
    <name type="scientific">Thiobacillus denitrificans (strain ATCC 25259 / T1)</name>
    <dbReference type="NCBI Taxonomy" id="292415"/>
    <lineage>
        <taxon>Bacteria</taxon>
        <taxon>Pseudomonadati</taxon>
        <taxon>Pseudomonadota</taxon>
        <taxon>Betaproteobacteria</taxon>
        <taxon>Nitrosomonadales</taxon>
        <taxon>Thiobacillaceae</taxon>
        <taxon>Thiobacillus</taxon>
    </lineage>
</organism>
<sequence length="284" mass="30385">MSARILDGKAMADTILAVIHDKVAEREVQGKRRPGLAVILVGGDPASAVYVRNKKRACERAGVNSVSHDLPETTTQPELLALIDTLNSDAAIDGILVQLPLPVHIDAETVIERIRPDKDVDGFHPYNIGRLAVKMPTLRPSTPRGIMTLLRATNEELRGKNAVMVGASNIVGRPMSLELLLAGCTITVCHSATRDLESFVRSAEVLVVGVGRPRMIPGDWVREGAIVIDVGINRLADGKLVGDVDFDTAVERAGWITPVPGGVGPMTVATLLENTLEAALMHNP</sequence>
<accession>Q3SKX9</accession>
<name>FOLD_THIDA</name>